<keyword id="KW-0027">Amidation</keyword>
<keyword id="KW-0903">Direct protein sequencing</keyword>
<keyword id="KW-0527">Neuropeptide</keyword>
<keyword id="KW-1185">Reference proteome</keyword>
<keyword id="KW-0964">Secreted</keyword>
<protein>
    <recommendedName>
        <fullName evidence="2">Tachykinin-related peptide 6</fullName>
        <shortName evidence="2">Rhopr-TRP-6</shortName>
    </recommendedName>
</protein>
<evidence type="ECO:0000269" key="1">
    <source>
    </source>
</evidence>
<evidence type="ECO:0000303" key="2">
    <source>
    </source>
</evidence>
<evidence type="ECO:0000305" key="3"/>
<comment type="function">
    <text evidence="3">Myoactive peptide. Increases the amplitude and frequency of spontaneous contractions and tonus of hindgut muscle.</text>
</comment>
<comment type="subcellular location">
    <subcellularLocation>
        <location evidence="3">Secreted</location>
    </subcellularLocation>
</comment>
<comment type="mass spectrometry" mass="1142.53" method="MALDI" evidence="1"/>
<sequence length="11" mass="1143">GPSSSAFFGMR</sequence>
<organism>
    <name type="scientific">Rhodnius prolixus</name>
    <name type="common">Triatomid bug</name>
    <dbReference type="NCBI Taxonomy" id="13249"/>
    <lineage>
        <taxon>Eukaryota</taxon>
        <taxon>Metazoa</taxon>
        <taxon>Ecdysozoa</taxon>
        <taxon>Arthropoda</taxon>
        <taxon>Hexapoda</taxon>
        <taxon>Insecta</taxon>
        <taxon>Pterygota</taxon>
        <taxon>Neoptera</taxon>
        <taxon>Paraneoptera</taxon>
        <taxon>Hemiptera</taxon>
        <taxon>Heteroptera</taxon>
        <taxon>Panheteroptera</taxon>
        <taxon>Cimicomorpha</taxon>
        <taxon>Reduviidae</taxon>
        <taxon>Triatominae</taxon>
        <taxon>Rhodnius</taxon>
    </lineage>
</organism>
<reference evidence="3" key="1">
    <citation type="journal article" date="2009" name="Proteomics">
        <title>The neuropeptidome of Rhodnius prolixus brain.</title>
        <authorList>
            <person name="Ons S."/>
            <person name="Richter F."/>
            <person name="Urlaub H."/>
            <person name="Pomar R.R."/>
        </authorList>
    </citation>
    <scope>PROTEIN SEQUENCE</scope>
    <scope>MASS SPECTROMETRY</scope>
    <scope>AMIDATION AT ARG-11</scope>
    <source>
        <tissue evidence="1">Brain</tissue>
    </source>
</reference>
<name>TRP6_RHOPR</name>
<dbReference type="InParanoid" id="P85807"/>
<dbReference type="Proteomes" id="UP000015103">
    <property type="component" value="Unassembled WGS sequence"/>
</dbReference>
<dbReference type="GO" id="GO:0005576">
    <property type="term" value="C:extracellular region"/>
    <property type="evidence" value="ECO:0007669"/>
    <property type="project" value="UniProtKB-SubCell"/>
</dbReference>
<dbReference type="GO" id="GO:0007218">
    <property type="term" value="P:neuropeptide signaling pathway"/>
    <property type="evidence" value="ECO:0007669"/>
    <property type="project" value="UniProtKB-KW"/>
</dbReference>
<accession>P85807</accession>
<proteinExistence type="evidence at protein level"/>
<feature type="peptide" id="PRO_0000365757" description="Tachykinin-related peptide 6" evidence="1">
    <location>
        <begin position="1"/>
        <end position="11"/>
    </location>
</feature>
<feature type="modified residue" description="Arginine amide" evidence="1">
    <location>
        <position position="11"/>
    </location>
</feature>